<keyword id="KW-1003">Cell membrane</keyword>
<keyword id="KW-0472">Membrane</keyword>
<keyword id="KW-1185">Reference proteome</keyword>
<keyword id="KW-1277">Toxin-antitoxin system</keyword>
<keyword id="KW-0812">Transmembrane</keyword>
<keyword id="KW-1133">Transmembrane helix</keyword>
<reference key="1">
    <citation type="journal article" date="1997" name="Nature">
        <title>The complete genome sequence of the Gram-positive bacterium Bacillus subtilis.</title>
        <authorList>
            <person name="Kunst F."/>
            <person name="Ogasawara N."/>
            <person name="Moszer I."/>
            <person name="Albertini A.M."/>
            <person name="Alloni G."/>
            <person name="Azevedo V."/>
            <person name="Bertero M.G."/>
            <person name="Bessieres P."/>
            <person name="Bolotin A."/>
            <person name="Borchert S."/>
            <person name="Borriss R."/>
            <person name="Boursier L."/>
            <person name="Brans A."/>
            <person name="Braun M."/>
            <person name="Brignell S.C."/>
            <person name="Bron S."/>
            <person name="Brouillet S."/>
            <person name="Bruschi C.V."/>
            <person name="Caldwell B."/>
            <person name="Capuano V."/>
            <person name="Carter N.M."/>
            <person name="Choi S.-K."/>
            <person name="Codani J.-J."/>
            <person name="Connerton I.F."/>
            <person name="Cummings N.J."/>
            <person name="Daniel R.A."/>
            <person name="Denizot F."/>
            <person name="Devine K.M."/>
            <person name="Duesterhoeft A."/>
            <person name="Ehrlich S.D."/>
            <person name="Emmerson P.T."/>
            <person name="Entian K.-D."/>
            <person name="Errington J."/>
            <person name="Fabret C."/>
            <person name="Ferrari E."/>
            <person name="Foulger D."/>
            <person name="Fritz C."/>
            <person name="Fujita M."/>
            <person name="Fujita Y."/>
            <person name="Fuma S."/>
            <person name="Galizzi A."/>
            <person name="Galleron N."/>
            <person name="Ghim S.-Y."/>
            <person name="Glaser P."/>
            <person name="Goffeau A."/>
            <person name="Golightly E.J."/>
            <person name="Grandi G."/>
            <person name="Guiseppi G."/>
            <person name="Guy B.J."/>
            <person name="Haga K."/>
            <person name="Haiech J."/>
            <person name="Harwood C.R."/>
            <person name="Henaut A."/>
            <person name="Hilbert H."/>
            <person name="Holsappel S."/>
            <person name="Hosono S."/>
            <person name="Hullo M.-F."/>
            <person name="Itaya M."/>
            <person name="Jones L.-M."/>
            <person name="Joris B."/>
            <person name="Karamata D."/>
            <person name="Kasahara Y."/>
            <person name="Klaerr-Blanchard M."/>
            <person name="Klein C."/>
            <person name="Kobayashi Y."/>
            <person name="Koetter P."/>
            <person name="Koningstein G."/>
            <person name="Krogh S."/>
            <person name="Kumano M."/>
            <person name="Kurita K."/>
            <person name="Lapidus A."/>
            <person name="Lardinois S."/>
            <person name="Lauber J."/>
            <person name="Lazarevic V."/>
            <person name="Lee S.-M."/>
            <person name="Levine A."/>
            <person name="Liu H."/>
            <person name="Masuda S."/>
            <person name="Mauel C."/>
            <person name="Medigue C."/>
            <person name="Medina N."/>
            <person name="Mellado R.P."/>
            <person name="Mizuno M."/>
            <person name="Moestl D."/>
            <person name="Nakai S."/>
            <person name="Noback M."/>
            <person name="Noone D."/>
            <person name="O'Reilly M."/>
            <person name="Ogawa K."/>
            <person name="Ogiwara A."/>
            <person name="Oudega B."/>
            <person name="Park S.-H."/>
            <person name="Parro V."/>
            <person name="Pohl T.M."/>
            <person name="Portetelle D."/>
            <person name="Porwollik S."/>
            <person name="Prescott A.M."/>
            <person name="Presecan E."/>
            <person name="Pujic P."/>
            <person name="Purnelle B."/>
            <person name="Rapoport G."/>
            <person name="Rey M."/>
            <person name="Reynolds S."/>
            <person name="Rieger M."/>
            <person name="Rivolta C."/>
            <person name="Rocha E."/>
            <person name="Roche B."/>
            <person name="Rose M."/>
            <person name="Sadaie Y."/>
            <person name="Sato T."/>
            <person name="Scanlan E."/>
            <person name="Schleich S."/>
            <person name="Schroeter R."/>
            <person name="Scoffone F."/>
            <person name="Sekiguchi J."/>
            <person name="Sekowska A."/>
            <person name="Seror S.J."/>
            <person name="Serror P."/>
            <person name="Shin B.-S."/>
            <person name="Soldo B."/>
            <person name="Sorokin A."/>
            <person name="Tacconi E."/>
            <person name="Takagi T."/>
            <person name="Takahashi H."/>
            <person name="Takemaru K."/>
            <person name="Takeuchi M."/>
            <person name="Tamakoshi A."/>
            <person name="Tanaka T."/>
            <person name="Terpstra P."/>
            <person name="Tognoni A."/>
            <person name="Tosato V."/>
            <person name="Uchiyama S."/>
            <person name="Vandenbol M."/>
            <person name="Vannier F."/>
            <person name="Vassarotti A."/>
            <person name="Viari A."/>
            <person name="Wambutt R."/>
            <person name="Wedler E."/>
            <person name="Wedler H."/>
            <person name="Weitzenegger T."/>
            <person name="Winters P."/>
            <person name="Wipat A."/>
            <person name="Yamamoto H."/>
            <person name="Yamane K."/>
            <person name="Yasumoto K."/>
            <person name="Yata K."/>
            <person name="Yoshida K."/>
            <person name="Yoshikawa H.-F."/>
            <person name="Zumstein E."/>
            <person name="Yoshikawa H."/>
            <person name="Danchin A."/>
        </authorList>
    </citation>
    <scope>NUCLEOTIDE SEQUENCE [LARGE SCALE GENOMIC DNA]</scope>
    <source>
        <strain>168</strain>
    </source>
</reference>
<reference key="2">
    <citation type="journal article" date="2009" name="Gene">
        <title>Novel small RNA-encoding genes in the intergenic regions of Bacillus subtilis.</title>
        <authorList>
            <person name="Saito S."/>
            <person name="Kakeshita H."/>
            <person name="Nakamura K."/>
        </authorList>
    </citation>
    <scope>IDENTIFICATION</scope>
    <scope>INDUCTION</scope>
    <source>
        <strain>168</strain>
    </source>
</reference>
<reference key="3">
    <citation type="journal article" date="2010" name="Nucleic Acids Res.">
        <title>Identification of regulatory RNAs in Bacillus subtilis.</title>
        <authorList>
            <person name="Irnov I."/>
            <person name="Sharma C.M."/>
            <person name="Vogel J."/>
            <person name="Winkler W.C."/>
        </authorList>
    </citation>
    <scope>IDENTIFICATION</scope>
    <scope>DISCUSSION OF FUNCTION</scope>
    <source>
        <strain>168</strain>
    </source>
</reference>
<reference key="4">
    <citation type="journal article" date="2012" name="Mol. Microbiol.">
        <title>BsrG/SR4 from Bacillus subtilis--the first temperature-dependent type I toxin-antitoxin system.</title>
        <authorList>
            <person name="Jahn N."/>
            <person name="Preis H."/>
            <person name="Wiedemann C."/>
            <person name="Brantl S."/>
        </authorList>
    </citation>
    <scope>FUNCTION AS A TOXIN-ANTITOXIN SYSTEM</scope>
    <scope>INDUCTION</scope>
    <scope>DISRUPTION PHENOTYPE</scope>
    <scope>MUTAGENESIS OF 5-GLU--VAL-21; GLU-5; ILE-11; 16-LEU--LYS-38 AND ILE-27</scope>
    <source>
        <strain>168 / DB104</strain>
    </source>
</reference>
<reference key="5">
    <citation type="journal article" date="2013" name="Nucleic Acids Res.">
        <title>One antitoxin--two functions: SR4 controls toxin mRNA decay and translation.</title>
        <authorList>
            <person name="Jahn N."/>
            <person name="Brantl S."/>
        </authorList>
    </citation>
    <scope>INDUCTION</scope>
    <source>
        <strain>168 / DB104</strain>
    </source>
</reference>
<reference key="6">
    <citation type="journal article" date="2015" name="Mol. Microbiol.">
        <title>Against the mainstream: the membrane-associated type I toxin BsrG from Bacillus subtilis interferes with cell envelope biosynthesis without increasing membrane permeability.</title>
        <authorList>
            <person name="Jahn N."/>
            <person name="Brantl S."/>
            <person name="Strahl H."/>
        </authorList>
    </citation>
    <scope>FUNCTION</scope>
    <scope>SUBCELLULAR LOCATION</scope>
    <source>
        <strain>168 / 1A100</strain>
    </source>
</reference>
<reference key="7">
    <citation type="journal article" date="2016" name="Microbiology">
        <title>Heat-shock-induced refolding entails rapid degradation of bsrG toxin mRNA by RNases Y and J1.</title>
        <authorList>
            <person name="Jahn N."/>
            <person name="Brantl S."/>
        </authorList>
    </citation>
    <scope>INDUCTION</scope>
    <source>
        <strain>168 / DB104</strain>
    </source>
</reference>
<feature type="chain" id="PRO_0000450220" description="Small toxic protein BsrG">
    <location>
        <begin position="1"/>
        <end position="38"/>
    </location>
</feature>
<feature type="transmembrane region" description="Helical" evidence="1">
    <location>
        <begin position="11"/>
        <end position="31"/>
    </location>
</feature>
<feature type="mutagenesis site" description="No longer toxic." evidence="3">
    <original>ESLMIMINFGGLILNTV</original>
    <variation>QSLMKMINFGGLILNTG</variation>
    <location>
        <begin position="5"/>
        <end position="21"/>
    </location>
</feature>
<feature type="mutagenesis site" description="No longer toxic." evidence="3">
    <original>E</original>
    <variation>K</variation>
    <location>
        <position position="5"/>
    </location>
</feature>
<feature type="mutagenesis site" description="No longer toxic." evidence="3">
    <original>I</original>
    <variation>MIMI</variation>
    <location>
        <position position="11"/>
    </location>
</feature>
<feature type="mutagenesis site" description="No longer toxic." evidence="3">
    <location>
        <begin position="16"/>
        <end position="38"/>
    </location>
</feature>
<feature type="mutagenesis site" description="No longer toxic." evidence="3">
    <original>I</original>
    <variation>TVLLIFNI</variation>
    <location>
        <position position="27"/>
    </location>
</feature>
<proteinExistence type="evidence at protein level"/>
<comment type="function">
    <text evidence="3 4 5">Toxic component of a type I toxin-antitoxin (TA) system; expression in the absence of cognate antisense antitoxin SR4 RNA leads to cell lysis (PubMed:22229825, PubMed:23969414). Induced expression causes membrane invaginations that dislocate the cell wall synthesis machinery, leading to eventual death. Unlike many type I TA systems it does not form pores (PubMed:26234942). Base pairing occurs between the 3' UTRs of bsrG mRNA and SR4 RNA, which leads to initiation of degradation by RNase III (rnc) followed by the action of RNase Y (rny) and RNase R (rnr). Not toxic when expressed in E.coli (PubMed:22229825, PubMed:23969414). When induced during logarithmic growth it only slowly exerts its toxic effect. Expression during log growth leads to significant disturbances of cell envelope biosynthesis and cell morphology, causing cell membrane invaginations and delocalization of cell division and cell wall synthesis machinery. Cell lysis depends on mreB, lytC and lytD, suggesting expression of bsrG triggers autolysis rather than disintegration of the membrane. Additionally expression of bsrG also inhibits transcription (PubMed:26234942).</text>
</comment>
<comment type="subcellular location">
    <subcellularLocation>
        <location evidence="5">Cell membrane</location>
        <topology evidence="1">Single-pass membrane protein</topology>
    </subcellularLocation>
    <text evidence="5">Fusion of GFP to the C-terminus renders the protein non-toxic but still able to associate with the membrane.</text>
</comment>
<comment type="induction">
    <text evidence="2 3 4 6">Accumulates by 4 hours post-innoculation and into stationary phase in rich media; maximum expression occurs at 6 hours (PubMed:18948176). Low expression early in rich and minimal medium, higher expression after. The antitoxin antisense RNA SR4 is constitutively expressed at a constant level in all growth conditions and media tested. bsrG mRNA levels decrease rapidly upon 48 degrees Celsius heat shock (PubMed:22229825, PubMed:26802042). SR4 RNA not only base pairs with bsrG mRNA promoting its degradation, but also inhibits its translation as it sequesters the Shine-Dalgarno sequence (PubMed:23969414).</text>
</comment>
<comment type="disruption phenotype">
    <text evidence="3">Non-essential, it can be deleted. The gene for the antisense antitoxin SR4 RNA cannot be deleted.</text>
</comment>
<comment type="miscellaneous">
    <text evidence="8">Encoded in the SPbeta prophage; retention of this TA system may prevent the bacterium from losing SPbeta from its genome.</text>
</comment>
<gene>
    <name evidence="7" type="primary">bsrG</name>
    <name type="ORF">BSU_21546</name>
</gene>
<sequence length="38" mass="4336">MTVYESLMIMINFGGLILNTVLLIFNIMMIVTSSQKKK</sequence>
<evidence type="ECO:0000255" key="1"/>
<evidence type="ECO:0000269" key="2">
    <source>
    </source>
</evidence>
<evidence type="ECO:0000269" key="3">
    <source>
    </source>
</evidence>
<evidence type="ECO:0000269" key="4">
    <source>
    </source>
</evidence>
<evidence type="ECO:0000269" key="5">
    <source>
    </source>
</evidence>
<evidence type="ECO:0000269" key="6">
    <source>
    </source>
</evidence>
<evidence type="ECO:0000303" key="7">
    <source>
    </source>
</evidence>
<evidence type="ECO:0000303" key="8">
    <source>
    </source>
</evidence>
<name>BSRG_BACSU</name>
<dbReference type="EMBL" id="AL009126">
    <property type="protein sequence ID" value="CCQ48598.1"/>
    <property type="molecule type" value="Genomic_DNA"/>
</dbReference>
<dbReference type="RefSeq" id="WP_009967548.1">
    <property type="nucleotide sequence ID" value="NZ_OZ025638.1"/>
</dbReference>
<dbReference type="RefSeq" id="YP_009513970.1">
    <property type="nucleotide sequence ID" value="NC_000964.3"/>
</dbReference>
<dbReference type="SMR" id="L8EAY0"/>
<dbReference type="STRING" id="224308.BSU21546"/>
<dbReference type="PaxDb" id="224308-BSU21546"/>
<dbReference type="EnsemblBacteria" id="CCQ48598">
    <property type="protein sequence ID" value="CCQ48598"/>
    <property type="gene ID" value="BSU_21546"/>
</dbReference>
<dbReference type="GeneID" id="37862885"/>
<dbReference type="PATRIC" id="fig|224308.179.peg.2352"/>
<dbReference type="InParanoid" id="L8EAY0"/>
<dbReference type="OrthoDB" id="9880907at2"/>
<dbReference type="BioCyc" id="BSUB:MONOMER8J2-46"/>
<dbReference type="Proteomes" id="UP000001570">
    <property type="component" value="Chromosome"/>
</dbReference>
<dbReference type="GO" id="GO:0005886">
    <property type="term" value="C:plasma membrane"/>
    <property type="evidence" value="ECO:0007669"/>
    <property type="project" value="UniProtKB-SubCell"/>
</dbReference>
<dbReference type="InterPro" id="IPR031616">
    <property type="entry name" value="BsrE-like"/>
</dbReference>
<dbReference type="Pfam" id="PF16935">
    <property type="entry name" value="Hol_Tox"/>
    <property type="match status" value="1"/>
</dbReference>
<protein>
    <recommendedName>
        <fullName evidence="8">Small toxic protein BsrG</fullName>
    </recommendedName>
</protein>
<accession>L8EAY0</accession>
<organism>
    <name type="scientific">Bacillus subtilis (strain 168)</name>
    <dbReference type="NCBI Taxonomy" id="224308"/>
    <lineage>
        <taxon>Bacteria</taxon>
        <taxon>Bacillati</taxon>
        <taxon>Bacillota</taxon>
        <taxon>Bacilli</taxon>
        <taxon>Bacillales</taxon>
        <taxon>Bacillaceae</taxon>
        <taxon>Bacillus</taxon>
    </lineage>
</organism>